<reference key="1">
    <citation type="submission" date="2008-02" db="EMBL/GenBank/DDBJ databases">
        <title>Complete sequence of Pseudomonas putida W619.</title>
        <authorList>
            <person name="Copeland A."/>
            <person name="Lucas S."/>
            <person name="Lapidus A."/>
            <person name="Barry K."/>
            <person name="Detter J.C."/>
            <person name="Glavina del Rio T."/>
            <person name="Dalin E."/>
            <person name="Tice H."/>
            <person name="Pitluck S."/>
            <person name="Chain P."/>
            <person name="Malfatti S."/>
            <person name="Shin M."/>
            <person name="Vergez L."/>
            <person name="Schmutz J."/>
            <person name="Larimer F."/>
            <person name="Land M."/>
            <person name="Hauser L."/>
            <person name="Kyrpides N."/>
            <person name="Kim E."/>
            <person name="Taghavi S."/>
            <person name="Vangronsveld D."/>
            <person name="van der Lelie D."/>
            <person name="Richardson P."/>
        </authorList>
    </citation>
    <scope>NUCLEOTIDE SEQUENCE [LARGE SCALE GENOMIC DNA]</scope>
    <source>
        <strain>W619</strain>
    </source>
</reference>
<dbReference type="EC" id="2.5.1.39" evidence="1"/>
<dbReference type="EMBL" id="CP000949">
    <property type="protein sequence ID" value="ACA70662.1"/>
    <property type="molecule type" value="Genomic_DNA"/>
</dbReference>
<dbReference type="SMR" id="B1J454"/>
<dbReference type="STRING" id="390235.PputW619_0156"/>
<dbReference type="KEGG" id="ppw:PputW619_0156"/>
<dbReference type="eggNOG" id="COG0382">
    <property type="taxonomic scope" value="Bacteria"/>
</dbReference>
<dbReference type="HOGENOM" id="CLU_034879_1_0_6"/>
<dbReference type="OrthoDB" id="9782418at2"/>
<dbReference type="UniPathway" id="UPA00232"/>
<dbReference type="GO" id="GO:0005886">
    <property type="term" value="C:plasma membrane"/>
    <property type="evidence" value="ECO:0007669"/>
    <property type="project" value="UniProtKB-SubCell"/>
</dbReference>
<dbReference type="GO" id="GO:0008412">
    <property type="term" value="F:4-hydroxybenzoate polyprenyltransferase activity"/>
    <property type="evidence" value="ECO:0007669"/>
    <property type="project" value="UniProtKB-UniRule"/>
</dbReference>
<dbReference type="GO" id="GO:0006744">
    <property type="term" value="P:ubiquinone biosynthetic process"/>
    <property type="evidence" value="ECO:0007669"/>
    <property type="project" value="UniProtKB-UniRule"/>
</dbReference>
<dbReference type="CDD" id="cd13959">
    <property type="entry name" value="PT_UbiA_COQ2"/>
    <property type="match status" value="1"/>
</dbReference>
<dbReference type="FunFam" id="1.10.357.140:FF:000002">
    <property type="entry name" value="4-hydroxybenzoate octaprenyltransferase"/>
    <property type="match status" value="1"/>
</dbReference>
<dbReference type="FunFam" id="1.20.120.1780:FF:000001">
    <property type="entry name" value="4-hydroxybenzoate octaprenyltransferase"/>
    <property type="match status" value="1"/>
</dbReference>
<dbReference type="Gene3D" id="1.10.357.140">
    <property type="entry name" value="UbiA prenyltransferase"/>
    <property type="match status" value="1"/>
</dbReference>
<dbReference type="Gene3D" id="1.20.120.1780">
    <property type="entry name" value="UbiA prenyltransferase"/>
    <property type="match status" value="1"/>
</dbReference>
<dbReference type="HAMAP" id="MF_01635">
    <property type="entry name" value="UbiA"/>
    <property type="match status" value="1"/>
</dbReference>
<dbReference type="InterPro" id="IPR006370">
    <property type="entry name" value="HB_polyprenyltransferase-like"/>
</dbReference>
<dbReference type="InterPro" id="IPR039653">
    <property type="entry name" value="Prenyltransferase"/>
</dbReference>
<dbReference type="InterPro" id="IPR000537">
    <property type="entry name" value="UbiA_prenyltransferase"/>
</dbReference>
<dbReference type="InterPro" id="IPR044878">
    <property type="entry name" value="UbiA_sf"/>
</dbReference>
<dbReference type="NCBIfam" id="TIGR01474">
    <property type="entry name" value="ubiA_proteo"/>
    <property type="match status" value="1"/>
</dbReference>
<dbReference type="PANTHER" id="PTHR11048:SF28">
    <property type="entry name" value="4-HYDROXYBENZOATE POLYPRENYLTRANSFERASE, MITOCHONDRIAL"/>
    <property type="match status" value="1"/>
</dbReference>
<dbReference type="PANTHER" id="PTHR11048">
    <property type="entry name" value="PRENYLTRANSFERASES"/>
    <property type="match status" value="1"/>
</dbReference>
<dbReference type="Pfam" id="PF01040">
    <property type="entry name" value="UbiA"/>
    <property type="match status" value="1"/>
</dbReference>
<name>UBIA_PSEPW</name>
<gene>
    <name evidence="1" type="primary">ubiA</name>
    <name type="ordered locus">PputW619_0156</name>
</gene>
<feature type="chain" id="PRO_1000186680" description="4-hydroxybenzoate octaprenyltransferase">
    <location>
        <begin position="1"/>
        <end position="296"/>
    </location>
</feature>
<feature type="transmembrane region" description="Helical" evidence="1">
    <location>
        <begin position="28"/>
        <end position="48"/>
    </location>
</feature>
<feature type="transmembrane region" description="Helical" evidence="1">
    <location>
        <begin position="52"/>
        <end position="72"/>
    </location>
</feature>
<feature type="transmembrane region" description="Helical" evidence="1">
    <location>
        <begin position="102"/>
        <end position="122"/>
    </location>
</feature>
<feature type="transmembrane region" description="Helical" evidence="1">
    <location>
        <begin position="145"/>
        <end position="167"/>
    </location>
</feature>
<feature type="transmembrane region" description="Helical" evidence="1">
    <location>
        <begin position="174"/>
        <end position="196"/>
    </location>
</feature>
<feature type="transmembrane region" description="Helical" evidence="1">
    <location>
        <begin position="219"/>
        <end position="239"/>
    </location>
</feature>
<feature type="transmembrane region" description="Helical" evidence="1">
    <location>
        <begin position="241"/>
        <end position="261"/>
    </location>
</feature>
<feature type="transmembrane region" description="Helical" evidence="1">
    <location>
        <begin position="275"/>
        <end position="295"/>
    </location>
</feature>
<protein>
    <recommendedName>
        <fullName evidence="1">4-hydroxybenzoate octaprenyltransferase</fullName>
        <ecNumber evidence="1">2.5.1.39</ecNumber>
    </recommendedName>
    <alternativeName>
        <fullName evidence="1">4-HB polyprenyltransferase</fullName>
    </alternativeName>
</protein>
<comment type="function">
    <text evidence="1">Catalyzes the prenylation of para-hydroxybenzoate (PHB) with an all-trans polyprenyl group. Mediates the second step in the final reaction sequence of ubiquinone-8 (UQ-8) biosynthesis, which is the condensation of the polyisoprenoid side chain with PHB, generating the first membrane-bound Q intermediate 3-octaprenyl-4-hydroxybenzoate.</text>
</comment>
<comment type="catalytic activity">
    <reaction evidence="1">
        <text>all-trans-octaprenyl diphosphate + 4-hydroxybenzoate = 4-hydroxy-3-(all-trans-octaprenyl)benzoate + diphosphate</text>
        <dbReference type="Rhea" id="RHEA:27782"/>
        <dbReference type="ChEBI" id="CHEBI:1617"/>
        <dbReference type="ChEBI" id="CHEBI:17879"/>
        <dbReference type="ChEBI" id="CHEBI:33019"/>
        <dbReference type="ChEBI" id="CHEBI:57711"/>
        <dbReference type="EC" id="2.5.1.39"/>
    </reaction>
</comment>
<comment type="cofactor">
    <cofactor evidence="1">
        <name>Mg(2+)</name>
        <dbReference type="ChEBI" id="CHEBI:18420"/>
    </cofactor>
</comment>
<comment type="pathway">
    <text evidence="1">Cofactor biosynthesis; ubiquinone biosynthesis.</text>
</comment>
<comment type="subcellular location">
    <subcellularLocation>
        <location evidence="1">Cell inner membrane</location>
        <topology evidence="1">Multi-pass membrane protein</topology>
    </subcellularLocation>
</comment>
<comment type="similarity">
    <text evidence="1">Belongs to the UbiA prenyltransferase family.</text>
</comment>
<proteinExistence type="inferred from homology"/>
<organism>
    <name type="scientific">Pseudomonas putida (strain W619)</name>
    <dbReference type="NCBI Taxonomy" id="390235"/>
    <lineage>
        <taxon>Bacteria</taxon>
        <taxon>Pseudomonadati</taxon>
        <taxon>Pseudomonadota</taxon>
        <taxon>Gammaproteobacteria</taxon>
        <taxon>Pseudomonadales</taxon>
        <taxon>Pseudomonadaceae</taxon>
        <taxon>Pseudomonas</taxon>
    </lineage>
</organism>
<keyword id="KW-0997">Cell inner membrane</keyword>
<keyword id="KW-1003">Cell membrane</keyword>
<keyword id="KW-0460">Magnesium</keyword>
<keyword id="KW-0472">Membrane</keyword>
<keyword id="KW-0808">Transferase</keyword>
<keyword id="KW-0812">Transmembrane</keyword>
<keyword id="KW-1133">Transmembrane helix</keyword>
<keyword id="KW-0831">Ubiquinone biosynthesis</keyword>
<sequence length="296" mass="33041">MYLQLLKSLNRVHPRAWDFIQLSRMDRPIGIYLLLWPTLTAVWIAGLGSPTLANVLIFGLGVVLMRAAGCCINDFADRKVDGHVKRTADRPLASGRVKPREALALFGILVAVSFLLVLCTNSKTVWLSFGAVALAFCYPFMKRYTYYPQVVLGAAYSWGIPMAFTAAGGELPASAWLLYIANLLWTVGYDTYYAMVDRDDDLKIGVKSTAILFGESDRMIILTLQMLSLGCLLLAGSRFELGGWFHLGLLGAALCFAWEYWSTRKLDRESCFKAFLHNHWAGLLVFMGVVLDYALR</sequence>
<accession>B1J454</accession>
<evidence type="ECO:0000255" key="1">
    <source>
        <dbReference type="HAMAP-Rule" id="MF_01635"/>
    </source>
</evidence>